<name>GLPK_ALLAM</name>
<evidence type="ECO:0000255" key="1">
    <source>
        <dbReference type="HAMAP-Rule" id="MF_00186"/>
    </source>
</evidence>
<gene>
    <name evidence="1" type="primary">glpK</name>
    <name type="ordered locus">Avi_3316</name>
</gene>
<reference key="1">
    <citation type="journal article" date="2009" name="J. Bacteriol.">
        <title>Genome sequences of three Agrobacterium biovars help elucidate the evolution of multichromosome genomes in bacteria.</title>
        <authorList>
            <person name="Slater S.C."/>
            <person name="Goldman B.S."/>
            <person name="Goodner B."/>
            <person name="Setubal J.C."/>
            <person name="Farrand S.K."/>
            <person name="Nester E.W."/>
            <person name="Burr T.J."/>
            <person name="Banta L."/>
            <person name="Dickerman A.W."/>
            <person name="Paulsen I."/>
            <person name="Otten L."/>
            <person name="Suen G."/>
            <person name="Welch R."/>
            <person name="Almeida N.F."/>
            <person name="Arnold F."/>
            <person name="Burton O.T."/>
            <person name="Du Z."/>
            <person name="Ewing A."/>
            <person name="Godsy E."/>
            <person name="Heisel S."/>
            <person name="Houmiel K.L."/>
            <person name="Jhaveri J."/>
            <person name="Lu J."/>
            <person name="Miller N.M."/>
            <person name="Norton S."/>
            <person name="Chen Q."/>
            <person name="Phoolcharoen W."/>
            <person name="Ohlin V."/>
            <person name="Ondrusek D."/>
            <person name="Pride N."/>
            <person name="Stricklin S.L."/>
            <person name="Sun J."/>
            <person name="Wheeler C."/>
            <person name="Wilson L."/>
            <person name="Zhu H."/>
            <person name="Wood D.W."/>
        </authorList>
    </citation>
    <scope>NUCLEOTIDE SEQUENCE [LARGE SCALE GENOMIC DNA]</scope>
    <source>
        <strain>ATCC BAA-846 / DSM 112012 / S4</strain>
    </source>
</reference>
<keyword id="KW-0067">ATP-binding</keyword>
<keyword id="KW-0319">Glycerol metabolism</keyword>
<keyword id="KW-0418">Kinase</keyword>
<keyword id="KW-0547">Nucleotide-binding</keyword>
<keyword id="KW-1185">Reference proteome</keyword>
<keyword id="KW-0808">Transferase</keyword>
<sequence length="497" mass="53508">MGGFVLAIDQGTTSSRAIVFDGAMRIVGTGQKEFPQIFPQSGWVEHDPDAIWDSVVSSIHDALARARITAGDLAAIGITNQRETVVVWDKDTGKPIHNAIVWQDRRTSAFCETLKRDGLEATVTTKTGLLLDPYFSGTKLSWLLDHVEGARARAEQGGLCFGTVDTYLIWRLTGGKSFVTDATNASRTLIFNIAEHGWDEELLALLNIPAAMLPEVKDCAADFGVTDKAVFGAAVPILGVAGDQQAATIGQACFAPGMVKSTYGTGCFALLNTGADRVVSKSRLLTTIAYRMDGKTTYALEGSIFIAGAAVQWLRDGLKVIGDAAETGRLAAEADPGQPVYLVPAFTGLGAPWWDPDARGALFGLTRNTGPAELARAALEAVCYQTRDLLDAMHKDWQNGEDDMVLRVDGGMAASDWTMQRLADLLDAPVDRPSVIETTALGAAFLAASRVGLWPGMDAFARAWARDHRFEPVMDAETRTEKLRGWRDAVRRTLTAG</sequence>
<proteinExistence type="inferred from homology"/>
<dbReference type="EC" id="2.7.1.30" evidence="1"/>
<dbReference type="EMBL" id="CP000633">
    <property type="protein sequence ID" value="ACM37374.1"/>
    <property type="molecule type" value="Genomic_DNA"/>
</dbReference>
<dbReference type="RefSeq" id="WP_015916793.1">
    <property type="nucleotide sequence ID" value="NC_011989.1"/>
</dbReference>
<dbReference type="SMR" id="B9JZR4"/>
<dbReference type="STRING" id="311402.Avi_3316"/>
<dbReference type="KEGG" id="avi:Avi_3316"/>
<dbReference type="eggNOG" id="COG0554">
    <property type="taxonomic scope" value="Bacteria"/>
</dbReference>
<dbReference type="HOGENOM" id="CLU_009281_2_3_5"/>
<dbReference type="UniPathway" id="UPA00618">
    <property type="reaction ID" value="UER00672"/>
</dbReference>
<dbReference type="Proteomes" id="UP000001596">
    <property type="component" value="Chromosome 1"/>
</dbReference>
<dbReference type="GO" id="GO:0005829">
    <property type="term" value="C:cytosol"/>
    <property type="evidence" value="ECO:0007669"/>
    <property type="project" value="TreeGrafter"/>
</dbReference>
<dbReference type="GO" id="GO:0005524">
    <property type="term" value="F:ATP binding"/>
    <property type="evidence" value="ECO:0007669"/>
    <property type="project" value="UniProtKB-UniRule"/>
</dbReference>
<dbReference type="GO" id="GO:0004370">
    <property type="term" value="F:glycerol kinase activity"/>
    <property type="evidence" value="ECO:0000250"/>
    <property type="project" value="UniProtKB"/>
</dbReference>
<dbReference type="GO" id="GO:0019563">
    <property type="term" value="P:glycerol catabolic process"/>
    <property type="evidence" value="ECO:0007669"/>
    <property type="project" value="UniProtKB-UniRule"/>
</dbReference>
<dbReference type="GO" id="GO:0006071">
    <property type="term" value="P:glycerol metabolic process"/>
    <property type="evidence" value="ECO:0000250"/>
    <property type="project" value="UniProtKB"/>
</dbReference>
<dbReference type="GO" id="GO:0006072">
    <property type="term" value="P:glycerol-3-phosphate metabolic process"/>
    <property type="evidence" value="ECO:0007669"/>
    <property type="project" value="InterPro"/>
</dbReference>
<dbReference type="CDD" id="cd07786">
    <property type="entry name" value="FGGY_EcGK_like"/>
    <property type="match status" value="1"/>
</dbReference>
<dbReference type="FunFam" id="3.30.420.40:FF:000007">
    <property type="entry name" value="Glycerol kinase"/>
    <property type="match status" value="1"/>
</dbReference>
<dbReference type="FunFam" id="3.30.420.40:FF:000008">
    <property type="entry name" value="Glycerol kinase"/>
    <property type="match status" value="1"/>
</dbReference>
<dbReference type="Gene3D" id="3.30.420.40">
    <property type="match status" value="2"/>
</dbReference>
<dbReference type="HAMAP" id="MF_00186">
    <property type="entry name" value="Glycerol_kin"/>
    <property type="match status" value="1"/>
</dbReference>
<dbReference type="InterPro" id="IPR043129">
    <property type="entry name" value="ATPase_NBD"/>
</dbReference>
<dbReference type="InterPro" id="IPR000577">
    <property type="entry name" value="Carb_kinase_FGGY"/>
</dbReference>
<dbReference type="InterPro" id="IPR018483">
    <property type="entry name" value="Carb_kinase_FGGY_CS"/>
</dbReference>
<dbReference type="InterPro" id="IPR018485">
    <property type="entry name" value="FGGY_C"/>
</dbReference>
<dbReference type="InterPro" id="IPR018484">
    <property type="entry name" value="FGGY_N"/>
</dbReference>
<dbReference type="InterPro" id="IPR005999">
    <property type="entry name" value="Glycerol_kin"/>
</dbReference>
<dbReference type="NCBIfam" id="TIGR01311">
    <property type="entry name" value="glycerol_kin"/>
    <property type="match status" value="1"/>
</dbReference>
<dbReference type="NCBIfam" id="NF000756">
    <property type="entry name" value="PRK00047.1"/>
    <property type="match status" value="1"/>
</dbReference>
<dbReference type="PANTHER" id="PTHR10196:SF78">
    <property type="entry name" value="GLYCEROL KINASE"/>
    <property type="match status" value="1"/>
</dbReference>
<dbReference type="PANTHER" id="PTHR10196">
    <property type="entry name" value="SUGAR KINASE"/>
    <property type="match status" value="1"/>
</dbReference>
<dbReference type="Pfam" id="PF02782">
    <property type="entry name" value="FGGY_C"/>
    <property type="match status" value="1"/>
</dbReference>
<dbReference type="Pfam" id="PF00370">
    <property type="entry name" value="FGGY_N"/>
    <property type="match status" value="1"/>
</dbReference>
<dbReference type="PIRSF" id="PIRSF000538">
    <property type="entry name" value="GlpK"/>
    <property type="match status" value="1"/>
</dbReference>
<dbReference type="SUPFAM" id="SSF53067">
    <property type="entry name" value="Actin-like ATPase domain"/>
    <property type="match status" value="2"/>
</dbReference>
<dbReference type="PROSITE" id="PS00933">
    <property type="entry name" value="FGGY_KINASES_1"/>
    <property type="match status" value="1"/>
</dbReference>
<dbReference type="PROSITE" id="PS00445">
    <property type="entry name" value="FGGY_KINASES_2"/>
    <property type="match status" value="1"/>
</dbReference>
<organism>
    <name type="scientific">Allorhizobium ampelinum (strain ATCC BAA-846 / DSM 112012 / S4)</name>
    <name type="common">Agrobacterium vitis (strain S4)</name>
    <dbReference type="NCBI Taxonomy" id="311402"/>
    <lineage>
        <taxon>Bacteria</taxon>
        <taxon>Pseudomonadati</taxon>
        <taxon>Pseudomonadota</taxon>
        <taxon>Alphaproteobacteria</taxon>
        <taxon>Hyphomicrobiales</taxon>
        <taxon>Rhizobiaceae</taxon>
        <taxon>Rhizobium/Agrobacterium group</taxon>
        <taxon>Allorhizobium</taxon>
        <taxon>Allorhizobium ampelinum</taxon>
    </lineage>
</organism>
<accession>B9JZR4</accession>
<feature type="chain" id="PRO_1000124177" description="Glycerol kinase">
    <location>
        <begin position="1"/>
        <end position="497"/>
    </location>
</feature>
<feature type="binding site" evidence="1">
    <location>
        <position position="12"/>
    </location>
    <ligand>
        <name>ADP</name>
        <dbReference type="ChEBI" id="CHEBI:456216"/>
    </ligand>
</feature>
<feature type="binding site" evidence="1">
    <location>
        <position position="12"/>
    </location>
    <ligand>
        <name>ATP</name>
        <dbReference type="ChEBI" id="CHEBI:30616"/>
    </ligand>
</feature>
<feature type="binding site" evidence="1">
    <location>
        <position position="12"/>
    </location>
    <ligand>
        <name>sn-glycerol 3-phosphate</name>
        <dbReference type="ChEBI" id="CHEBI:57597"/>
    </ligand>
</feature>
<feature type="binding site" evidence="1">
    <location>
        <position position="13"/>
    </location>
    <ligand>
        <name>ATP</name>
        <dbReference type="ChEBI" id="CHEBI:30616"/>
    </ligand>
</feature>
<feature type="binding site" evidence="1">
    <location>
        <position position="14"/>
    </location>
    <ligand>
        <name>ATP</name>
        <dbReference type="ChEBI" id="CHEBI:30616"/>
    </ligand>
</feature>
<feature type="binding site" evidence="1">
    <location>
        <position position="16"/>
    </location>
    <ligand>
        <name>ADP</name>
        <dbReference type="ChEBI" id="CHEBI:456216"/>
    </ligand>
</feature>
<feature type="binding site" evidence="1">
    <location>
        <position position="82"/>
    </location>
    <ligand>
        <name>glycerol</name>
        <dbReference type="ChEBI" id="CHEBI:17754"/>
    </ligand>
</feature>
<feature type="binding site" evidence="1">
    <location>
        <position position="82"/>
    </location>
    <ligand>
        <name>sn-glycerol 3-phosphate</name>
        <dbReference type="ChEBI" id="CHEBI:57597"/>
    </ligand>
</feature>
<feature type="binding site" evidence="1">
    <location>
        <position position="83"/>
    </location>
    <ligand>
        <name>glycerol</name>
        <dbReference type="ChEBI" id="CHEBI:17754"/>
    </ligand>
</feature>
<feature type="binding site" evidence="1">
    <location>
        <position position="83"/>
    </location>
    <ligand>
        <name>sn-glycerol 3-phosphate</name>
        <dbReference type="ChEBI" id="CHEBI:57597"/>
    </ligand>
</feature>
<feature type="binding site" evidence="1">
    <location>
        <position position="134"/>
    </location>
    <ligand>
        <name>glycerol</name>
        <dbReference type="ChEBI" id="CHEBI:17754"/>
    </ligand>
</feature>
<feature type="binding site" evidence="1">
    <location>
        <position position="134"/>
    </location>
    <ligand>
        <name>sn-glycerol 3-phosphate</name>
        <dbReference type="ChEBI" id="CHEBI:57597"/>
    </ligand>
</feature>
<feature type="binding site" evidence="1">
    <location>
        <position position="243"/>
    </location>
    <ligand>
        <name>glycerol</name>
        <dbReference type="ChEBI" id="CHEBI:17754"/>
    </ligand>
</feature>
<feature type="binding site" evidence="1">
    <location>
        <position position="243"/>
    </location>
    <ligand>
        <name>sn-glycerol 3-phosphate</name>
        <dbReference type="ChEBI" id="CHEBI:57597"/>
    </ligand>
</feature>
<feature type="binding site" evidence="1">
    <location>
        <position position="244"/>
    </location>
    <ligand>
        <name>glycerol</name>
        <dbReference type="ChEBI" id="CHEBI:17754"/>
    </ligand>
</feature>
<feature type="binding site" evidence="1">
    <location>
        <position position="265"/>
    </location>
    <ligand>
        <name>ADP</name>
        <dbReference type="ChEBI" id="CHEBI:456216"/>
    </ligand>
</feature>
<feature type="binding site" evidence="1">
    <location>
        <position position="265"/>
    </location>
    <ligand>
        <name>ATP</name>
        <dbReference type="ChEBI" id="CHEBI:30616"/>
    </ligand>
</feature>
<feature type="binding site" evidence="1">
    <location>
        <position position="308"/>
    </location>
    <ligand>
        <name>ADP</name>
        <dbReference type="ChEBI" id="CHEBI:456216"/>
    </ligand>
</feature>
<feature type="binding site" evidence="1">
    <location>
        <position position="308"/>
    </location>
    <ligand>
        <name>ATP</name>
        <dbReference type="ChEBI" id="CHEBI:30616"/>
    </ligand>
</feature>
<feature type="binding site" evidence="1">
    <location>
        <position position="312"/>
    </location>
    <ligand>
        <name>ATP</name>
        <dbReference type="ChEBI" id="CHEBI:30616"/>
    </ligand>
</feature>
<feature type="binding site" evidence="1">
    <location>
        <position position="411"/>
    </location>
    <ligand>
        <name>ADP</name>
        <dbReference type="ChEBI" id="CHEBI:456216"/>
    </ligand>
</feature>
<feature type="binding site" evidence="1">
    <location>
        <position position="411"/>
    </location>
    <ligand>
        <name>ATP</name>
        <dbReference type="ChEBI" id="CHEBI:30616"/>
    </ligand>
</feature>
<comment type="function">
    <text evidence="1">Key enzyme in the regulation of glycerol uptake and metabolism. Catalyzes the phosphorylation of glycerol to yield sn-glycerol 3-phosphate.</text>
</comment>
<comment type="catalytic activity">
    <reaction evidence="1">
        <text>glycerol + ATP = sn-glycerol 3-phosphate + ADP + H(+)</text>
        <dbReference type="Rhea" id="RHEA:21644"/>
        <dbReference type="ChEBI" id="CHEBI:15378"/>
        <dbReference type="ChEBI" id="CHEBI:17754"/>
        <dbReference type="ChEBI" id="CHEBI:30616"/>
        <dbReference type="ChEBI" id="CHEBI:57597"/>
        <dbReference type="ChEBI" id="CHEBI:456216"/>
        <dbReference type="EC" id="2.7.1.30"/>
    </reaction>
</comment>
<comment type="activity regulation">
    <text evidence="1">Inhibited by fructose 1,6-bisphosphate (FBP).</text>
</comment>
<comment type="pathway">
    <text evidence="1">Polyol metabolism; glycerol degradation via glycerol kinase pathway; sn-glycerol 3-phosphate from glycerol: step 1/1.</text>
</comment>
<comment type="similarity">
    <text evidence="1">Belongs to the FGGY kinase family.</text>
</comment>
<protein>
    <recommendedName>
        <fullName evidence="1">Glycerol kinase</fullName>
        <ecNumber evidence="1">2.7.1.30</ecNumber>
    </recommendedName>
    <alternativeName>
        <fullName evidence="1">ATP:glycerol 3-phosphotransferase</fullName>
    </alternativeName>
    <alternativeName>
        <fullName evidence="1">Glycerokinase</fullName>
        <shortName evidence="1">GK</shortName>
    </alternativeName>
</protein>